<evidence type="ECO:0000250" key="1"/>
<evidence type="ECO:0000250" key="2">
    <source>
        <dbReference type="UniProtKB" id="Q64HY3"/>
    </source>
</evidence>
<evidence type="ECO:0000255" key="3">
    <source>
        <dbReference type="PROSITE-ProRule" id="PRU00042"/>
    </source>
</evidence>
<evidence type="ECO:0000256" key="4">
    <source>
        <dbReference type="SAM" id="MobiDB-lite"/>
    </source>
</evidence>
<evidence type="ECO:0000269" key="5">
    <source>
    </source>
</evidence>
<evidence type="ECO:0000305" key="6"/>
<protein>
    <recommendedName>
        <fullName>Transcription factor Sp9</fullName>
    </recommendedName>
</protein>
<accession>P0CG40</accession>
<comment type="function">
    <text evidence="1">Transcription factor which plays a key role in limb development. Positively regulates FGF8 expression in the apical ectodermal ridge (AER) and contributes to limb outgrowth in embryos (By similarity).</text>
</comment>
<comment type="subcellular location">
    <subcellularLocation>
        <location evidence="6">Nucleus</location>
    </subcellularLocation>
</comment>
<comment type="domain">
    <text evidence="5">The 9aaTAD motif is a transactivation domain present in a large number of yeast and animal transcription factors. In SP9, the motif is inactive.</text>
</comment>
<comment type="similarity">
    <text evidence="6">Belongs to the Sp1 C2H2-type zinc-finger protein family.</text>
</comment>
<keyword id="KW-0238">DNA-binding</keyword>
<keyword id="KW-0479">Metal-binding</keyword>
<keyword id="KW-0539">Nucleus</keyword>
<keyword id="KW-0597">Phosphoprotein</keyword>
<keyword id="KW-1267">Proteomics identification</keyword>
<keyword id="KW-1185">Reference proteome</keyword>
<keyword id="KW-0677">Repeat</keyword>
<keyword id="KW-0804">Transcription</keyword>
<keyword id="KW-0805">Transcription regulation</keyword>
<keyword id="KW-0862">Zinc</keyword>
<keyword id="KW-0863">Zinc-finger</keyword>
<feature type="chain" id="PRO_0000395450" description="Transcription factor Sp9">
    <location>
        <begin position="1"/>
        <end position="484"/>
    </location>
</feature>
<feature type="zinc finger region" description="C2H2-type 1" evidence="3">
    <location>
        <begin position="332"/>
        <end position="356"/>
    </location>
</feature>
<feature type="zinc finger region" description="C2H2-type 2" evidence="3">
    <location>
        <begin position="362"/>
        <end position="386"/>
    </location>
</feature>
<feature type="zinc finger region" description="C2H2-type 3" evidence="3">
    <location>
        <begin position="392"/>
        <end position="414"/>
    </location>
</feature>
<feature type="region of interest" description="Disordered" evidence="4">
    <location>
        <begin position="409"/>
        <end position="446"/>
    </location>
</feature>
<feature type="short sequence motif" description="9aaTAD; inactive" evidence="5">
    <location>
        <begin position="178"/>
        <end position="186"/>
    </location>
</feature>
<feature type="modified residue" description="Phosphoserine" evidence="2">
    <location>
        <position position="440"/>
    </location>
</feature>
<name>SP9_HUMAN</name>
<sequence length="484" mass="48915">MATSILGEEPRFGTTPLAMLAATCNKIGNTSPLTTLPESSAFAKGGFHPWKRSSSSCNLGSSLSGFAVATGGRGSGGLAGGSGAANSAFCLASTSPTSSAFSSDYGGLFSNSAAAAAAAAGVSPQEAGGQSAFISKVHTTAADGLYPRVGMAHPYESWYKSGFHSTLAAGEVTNGAASSWWDVHSSPGSWLEVQNPAGGLQSSLHSGAPQASLHSQLGTYNPDFSSLTHSAFSSTGLGSSAAAASHLLSTSQHLLAQDGFKPVLPSYSDSSAAVAAAAASAMISGAAAAAAGGSSARSARRYSGRATCDCPNCQEAERLGPAGASLRRKGLHSCHIPGCGKVYGKTSHLKAHLRWHTGERPFVCNWLFCGKRFTRSDELQRHLRTHTGEKRFACPVCNKRFMRSDHLSKHIKTHNGGGGGKKGSDSDTDASNLETPRSESPDLILHDSGVSAARAAAAAAAAAAAAAAAASAGGKEAASGPNDS</sequence>
<dbReference type="EMBL" id="AC018470">
    <property type="status" value="NOT_ANNOTATED_CDS"/>
    <property type="molecule type" value="Genomic_DNA"/>
</dbReference>
<dbReference type="EMBL" id="CH471058">
    <property type="protein sequence ID" value="EAX11147.1"/>
    <property type="molecule type" value="Genomic_DNA"/>
</dbReference>
<dbReference type="CCDS" id="CCDS46453.1"/>
<dbReference type="RefSeq" id="NP_001138722.1">
    <property type="nucleotide sequence ID" value="NM_001145250.2"/>
</dbReference>
<dbReference type="SMR" id="P0CG40"/>
<dbReference type="BioGRID" id="935248">
    <property type="interactions" value="1"/>
</dbReference>
<dbReference type="FunCoup" id="P0CG40">
    <property type="interactions" value="208"/>
</dbReference>
<dbReference type="IntAct" id="P0CG40">
    <property type="interactions" value="3"/>
</dbReference>
<dbReference type="STRING" id="9606.ENSP00000378418"/>
<dbReference type="GlyCosmos" id="P0CG40">
    <property type="glycosylation" value="1 site, 1 glycan"/>
</dbReference>
<dbReference type="GlyGen" id="P0CG40">
    <property type="glycosylation" value="2 sites, 1 N-linked glycan (1 site), 1 O-linked glycan (1 site)"/>
</dbReference>
<dbReference type="iPTMnet" id="P0CG40"/>
<dbReference type="PhosphoSitePlus" id="P0CG40"/>
<dbReference type="BioMuta" id="SP9"/>
<dbReference type="DMDM" id="300681123"/>
<dbReference type="jPOST" id="P0CG40"/>
<dbReference type="MassIVE" id="P0CG40"/>
<dbReference type="PaxDb" id="9606-ENSP00000378418"/>
<dbReference type="PeptideAtlas" id="P0CG40"/>
<dbReference type="ProteomicsDB" id="52470"/>
<dbReference type="Pumba" id="P0CG40"/>
<dbReference type="Antibodypedia" id="57975">
    <property type="antibodies" value="17 antibodies from 6 providers"/>
</dbReference>
<dbReference type="Ensembl" id="ENST00000394967.3">
    <property type="protein sequence ID" value="ENSP00000378418.2"/>
    <property type="gene ID" value="ENSG00000217236.2"/>
</dbReference>
<dbReference type="GeneID" id="100131390"/>
<dbReference type="KEGG" id="hsa:100131390"/>
<dbReference type="MANE-Select" id="ENST00000394967.3">
    <property type="protein sequence ID" value="ENSP00000378418.2"/>
    <property type="RefSeq nucleotide sequence ID" value="NM_001145250.2"/>
    <property type="RefSeq protein sequence ID" value="NP_001138722.1"/>
</dbReference>
<dbReference type="UCSC" id="uc010zem.2">
    <property type="organism name" value="human"/>
</dbReference>
<dbReference type="AGR" id="HGNC:30690"/>
<dbReference type="CTD" id="100131390"/>
<dbReference type="DisGeNET" id="100131390"/>
<dbReference type="GeneCards" id="SP9"/>
<dbReference type="HGNC" id="HGNC:30690">
    <property type="gene designation" value="SP9"/>
</dbReference>
<dbReference type="HPA" id="ENSG00000217236">
    <property type="expression patterns" value="Tissue enriched (brain)"/>
</dbReference>
<dbReference type="MIM" id="621003">
    <property type="type" value="gene"/>
</dbReference>
<dbReference type="neXtProt" id="NX_P0CG40"/>
<dbReference type="OpenTargets" id="ENSG00000217236"/>
<dbReference type="PharmGKB" id="PA164726207"/>
<dbReference type="VEuPathDB" id="HostDB:ENSG00000217236"/>
<dbReference type="eggNOG" id="KOG1721">
    <property type="taxonomic scope" value="Eukaryota"/>
</dbReference>
<dbReference type="GeneTree" id="ENSGT00940000162304"/>
<dbReference type="HOGENOM" id="CLU_019484_4_1_1"/>
<dbReference type="InParanoid" id="P0CG40"/>
<dbReference type="OMA" id="WVCESVG"/>
<dbReference type="OrthoDB" id="6365676at2759"/>
<dbReference type="PAN-GO" id="P0CG40">
    <property type="GO annotations" value="3 GO annotations based on evolutionary models"/>
</dbReference>
<dbReference type="PhylomeDB" id="P0CG40"/>
<dbReference type="TreeFam" id="TF350150"/>
<dbReference type="PathwayCommons" id="P0CG40"/>
<dbReference type="SignaLink" id="P0CG40"/>
<dbReference type="BioGRID-ORCS" id="100131390">
    <property type="hits" value="16 hits in 1166 CRISPR screens"/>
</dbReference>
<dbReference type="GenomeRNAi" id="100131390"/>
<dbReference type="Pharos" id="P0CG40">
    <property type="development level" value="Tdark"/>
</dbReference>
<dbReference type="PRO" id="PR:P0CG40"/>
<dbReference type="Proteomes" id="UP000005640">
    <property type="component" value="Chromosome 2"/>
</dbReference>
<dbReference type="RNAct" id="P0CG40">
    <property type="molecule type" value="protein"/>
</dbReference>
<dbReference type="Bgee" id="ENSG00000217236">
    <property type="expression patterns" value="Expressed in male germ line stem cell (sensu Vertebrata) in testis and 31 other cell types or tissues"/>
</dbReference>
<dbReference type="GO" id="GO:0000785">
    <property type="term" value="C:chromatin"/>
    <property type="evidence" value="ECO:0000247"/>
    <property type="project" value="NTNU_SB"/>
</dbReference>
<dbReference type="GO" id="GO:0005634">
    <property type="term" value="C:nucleus"/>
    <property type="evidence" value="ECO:0007669"/>
    <property type="project" value="UniProtKB-SubCell"/>
</dbReference>
<dbReference type="GO" id="GO:0000981">
    <property type="term" value="F:DNA-binding transcription factor activity, RNA polymerase II-specific"/>
    <property type="evidence" value="ECO:0000247"/>
    <property type="project" value="NTNU_SB"/>
</dbReference>
<dbReference type="GO" id="GO:0000978">
    <property type="term" value="F:RNA polymerase II cis-regulatory region sequence-specific DNA binding"/>
    <property type="evidence" value="ECO:0000318"/>
    <property type="project" value="GO_Central"/>
</dbReference>
<dbReference type="GO" id="GO:1990837">
    <property type="term" value="F:sequence-specific double-stranded DNA binding"/>
    <property type="evidence" value="ECO:0000314"/>
    <property type="project" value="ARUK-UCL"/>
</dbReference>
<dbReference type="GO" id="GO:0008270">
    <property type="term" value="F:zinc ion binding"/>
    <property type="evidence" value="ECO:0007669"/>
    <property type="project" value="UniProtKB-KW"/>
</dbReference>
<dbReference type="GO" id="GO:0030326">
    <property type="term" value="P:embryonic limb morphogenesis"/>
    <property type="evidence" value="ECO:0007669"/>
    <property type="project" value="Ensembl"/>
</dbReference>
<dbReference type="GO" id="GO:0006357">
    <property type="term" value="P:regulation of transcription by RNA polymerase II"/>
    <property type="evidence" value="ECO:0000318"/>
    <property type="project" value="GO_Central"/>
</dbReference>
<dbReference type="CDD" id="cd22549">
    <property type="entry name" value="SP9_N"/>
    <property type="match status" value="1"/>
</dbReference>
<dbReference type="FunFam" id="3.30.160.60:FF:000077">
    <property type="entry name" value="Sp8 transcription factor"/>
    <property type="match status" value="1"/>
</dbReference>
<dbReference type="FunFam" id="3.30.160.60:FF:000014">
    <property type="entry name" value="Transcription factor Sp3"/>
    <property type="match status" value="1"/>
</dbReference>
<dbReference type="FunFam" id="3.30.160.60:FF:000026">
    <property type="entry name" value="Transcription factor Sp3"/>
    <property type="match status" value="1"/>
</dbReference>
<dbReference type="Gene3D" id="3.30.160.60">
    <property type="entry name" value="Classic Zinc Finger"/>
    <property type="match status" value="3"/>
</dbReference>
<dbReference type="InterPro" id="IPR036236">
    <property type="entry name" value="Znf_C2H2_sf"/>
</dbReference>
<dbReference type="InterPro" id="IPR013087">
    <property type="entry name" value="Znf_C2H2_type"/>
</dbReference>
<dbReference type="PANTHER" id="PTHR23235">
    <property type="entry name" value="KRUEPPEL-LIKE TRANSCRIPTION FACTOR"/>
    <property type="match status" value="1"/>
</dbReference>
<dbReference type="PANTHER" id="PTHR23235:SF26">
    <property type="entry name" value="TRANSCRIPTION FACTOR SP9"/>
    <property type="match status" value="1"/>
</dbReference>
<dbReference type="Pfam" id="PF00096">
    <property type="entry name" value="zf-C2H2"/>
    <property type="match status" value="3"/>
</dbReference>
<dbReference type="SMART" id="SM00355">
    <property type="entry name" value="ZnF_C2H2"/>
    <property type="match status" value="3"/>
</dbReference>
<dbReference type="SUPFAM" id="SSF57667">
    <property type="entry name" value="beta-beta-alpha zinc fingers"/>
    <property type="match status" value="2"/>
</dbReference>
<dbReference type="PROSITE" id="PS00028">
    <property type="entry name" value="ZINC_FINGER_C2H2_1"/>
    <property type="match status" value="3"/>
</dbReference>
<dbReference type="PROSITE" id="PS50157">
    <property type="entry name" value="ZINC_FINGER_C2H2_2"/>
    <property type="match status" value="3"/>
</dbReference>
<proteinExistence type="evidence at protein level"/>
<organism>
    <name type="scientific">Homo sapiens</name>
    <name type="common">Human</name>
    <dbReference type="NCBI Taxonomy" id="9606"/>
    <lineage>
        <taxon>Eukaryota</taxon>
        <taxon>Metazoa</taxon>
        <taxon>Chordata</taxon>
        <taxon>Craniata</taxon>
        <taxon>Vertebrata</taxon>
        <taxon>Euteleostomi</taxon>
        <taxon>Mammalia</taxon>
        <taxon>Eutheria</taxon>
        <taxon>Euarchontoglires</taxon>
        <taxon>Primates</taxon>
        <taxon>Haplorrhini</taxon>
        <taxon>Catarrhini</taxon>
        <taxon>Hominidae</taxon>
        <taxon>Homo</taxon>
    </lineage>
</organism>
<reference key="1">
    <citation type="journal article" date="2005" name="Nature">
        <title>Generation and annotation of the DNA sequences of human chromosomes 2 and 4.</title>
        <authorList>
            <person name="Hillier L.W."/>
            <person name="Graves T.A."/>
            <person name="Fulton R.S."/>
            <person name="Fulton L.A."/>
            <person name="Pepin K.H."/>
            <person name="Minx P."/>
            <person name="Wagner-McPherson C."/>
            <person name="Layman D."/>
            <person name="Wylie K."/>
            <person name="Sekhon M."/>
            <person name="Becker M.C."/>
            <person name="Fewell G.A."/>
            <person name="Delehaunty K.D."/>
            <person name="Miner T.L."/>
            <person name="Nash W.E."/>
            <person name="Kremitzki C."/>
            <person name="Oddy L."/>
            <person name="Du H."/>
            <person name="Sun H."/>
            <person name="Bradshaw-Cordum H."/>
            <person name="Ali J."/>
            <person name="Carter J."/>
            <person name="Cordes M."/>
            <person name="Harris A."/>
            <person name="Isak A."/>
            <person name="van Brunt A."/>
            <person name="Nguyen C."/>
            <person name="Du F."/>
            <person name="Courtney L."/>
            <person name="Kalicki J."/>
            <person name="Ozersky P."/>
            <person name="Abbott S."/>
            <person name="Armstrong J."/>
            <person name="Belter E.A."/>
            <person name="Caruso L."/>
            <person name="Cedroni M."/>
            <person name="Cotton M."/>
            <person name="Davidson T."/>
            <person name="Desai A."/>
            <person name="Elliott G."/>
            <person name="Erb T."/>
            <person name="Fronick C."/>
            <person name="Gaige T."/>
            <person name="Haakenson W."/>
            <person name="Haglund K."/>
            <person name="Holmes A."/>
            <person name="Harkins R."/>
            <person name="Kim K."/>
            <person name="Kruchowski S.S."/>
            <person name="Strong C.M."/>
            <person name="Grewal N."/>
            <person name="Goyea E."/>
            <person name="Hou S."/>
            <person name="Levy A."/>
            <person name="Martinka S."/>
            <person name="Mead K."/>
            <person name="McLellan M.D."/>
            <person name="Meyer R."/>
            <person name="Randall-Maher J."/>
            <person name="Tomlinson C."/>
            <person name="Dauphin-Kohlberg S."/>
            <person name="Kozlowicz-Reilly A."/>
            <person name="Shah N."/>
            <person name="Swearengen-Shahid S."/>
            <person name="Snider J."/>
            <person name="Strong J.T."/>
            <person name="Thompson J."/>
            <person name="Yoakum M."/>
            <person name="Leonard S."/>
            <person name="Pearman C."/>
            <person name="Trani L."/>
            <person name="Radionenko M."/>
            <person name="Waligorski J.E."/>
            <person name="Wang C."/>
            <person name="Rock S.M."/>
            <person name="Tin-Wollam A.-M."/>
            <person name="Maupin R."/>
            <person name="Latreille P."/>
            <person name="Wendl M.C."/>
            <person name="Yang S.-P."/>
            <person name="Pohl C."/>
            <person name="Wallis J.W."/>
            <person name="Spieth J."/>
            <person name="Bieri T.A."/>
            <person name="Berkowicz N."/>
            <person name="Nelson J.O."/>
            <person name="Osborne J."/>
            <person name="Ding L."/>
            <person name="Meyer R."/>
            <person name="Sabo A."/>
            <person name="Shotland Y."/>
            <person name="Sinha P."/>
            <person name="Wohldmann P.E."/>
            <person name="Cook L.L."/>
            <person name="Hickenbotham M.T."/>
            <person name="Eldred J."/>
            <person name="Williams D."/>
            <person name="Jones T.A."/>
            <person name="She X."/>
            <person name="Ciccarelli F.D."/>
            <person name="Izaurralde E."/>
            <person name="Taylor J."/>
            <person name="Schmutz J."/>
            <person name="Myers R.M."/>
            <person name="Cox D.R."/>
            <person name="Huang X."/>
            <person name="McPherson J.D."/>
            <person name="Mardis E.R."/>
            <person name="Clifton S.W."/>
            <person name="Warren W.C."/>
            <person name="Chinwalla A.T."/>
            <person name="Eddy S.R."/>
            <person name="Marra M.A."/>
            <person name="Ovcharenko I."/>
            <person name="Furey T.S."/>
            <person name="Miller W."/>
            <person name="Eichler E.E."/>
            <person name="Bork P."/>
            <person name="Suyama M."/>
            <person name="Torrents D."/>
            <person name="Waterston R.H."/>
            <person name="Wilson R.K."/>
        </authorList>
    </citation>
    <scope>NUCLEOTIDE SEQUENCE [LARGE SCALE GENOMIC DNA]</scope>
</reference>
<reference key="2">
    <citation type="submission" date="2005-07" db="EMBL/GenBank/DDBJ databases">
        <authorList>
            <person name="Mural R.J."/>
            <person name="Istrail S."/>
            <person name="Sutton G.G."/>
            <person name="Florea L."/>
            <person name="Halpern A.L."/>
            <person name="Mobarry C.M."/>
            <person name="Lippert R."/>
            <person name="Walenz B."/>
            <person name="Shatkay H."/>
            <person name="Dew I."/>
            <person name="Miller J.R."/>
            <person name="Flanigan M.J."/>
            <person name="Edwards N.J."/>
            <person name="Bolanos R."/>
            <person name="Fasulo D."/>
            <person name="Halldorsson B.V."/>
            <person name="Hannenhalli S."/>
            <person name="Turner R."/>
            <person name="Yooseph S."/>
            <person name="Lu F."/>
            <person name="Nusskern D.R."/>
            <person name="Shue B.C."/>
            <person name="Zheng X.H."/>
            <person name="Zhong F."/>
            <person name="Delcher A.L."/>
            <person name="Huson D.H."/>
            <person name="Kravitz S.A."/>
            <person name="Mouchard L."/>
            <person name="Reinert K."/>
            <person name="Remington K.A."/>
            <person name="Clark A.G."/>
            <person name="Waterman M.S."/>
            <person name="Eichler E.E."/>
            <person name="Adams M.D."/>
            <person name="Hunkapiller M.W."/>
            <person name="Myers E.W."/>
            <person name="Venter J.C."/>
        </authorList>
    </citation>
    <scope>NUCLEOTIDE SEQUENCE [LARGE SCALE GENOMIC DNA]</scope>
</reference>
<reference key="3">
    <citation type="journal article" date="2020" name="Cell. Mol. Life Sci.">
        <title>The evolution of the 9aaTAD domain in Sp2 proteins: inactivation with valines and intron reservoirs.</title>
        <authorList>
            <person name="Piskacek M."/>
            <person name="Havelka M."/>
            <person name="Jendruchova K."/>
            <person name="Knight A."/>
            <person name="Keegan L.P."/>
        </authorList>
    </citation>
    <scope>INACTIVATION OF 9AATAD MOTIF</scope>
</reference>
<gene>
    <name type="primary">SP9</name>
</gene>